<dbReference type="EC" id="6.1.1.15" evidence="1"/>
<dbReference type="EMBL" id="BX548174">
    <property type="protein sequence ID" value="CAE18967.1"/>
    <property type="molecule type" value="Genomic_DNA"/>
</dbReference>
<dbReference type="RefSeq" id="WP_011132143.1">
    <property type="nucleotide sequence ID" value="NC_005072.1"/>
</dbReference>
<dbReference type="SMR" id="Q7V2H0"/>
<dbReference type="STRING" id="59919.PMM0508"/>
<dbReference type="KEGG" id="pmm:PMM0508"/>
<dbReference type="eggNOG" id="COG0442">
    <property type="taxonomic scope" value="Bacteria"/>
</dbReference>
<dbReference type="HOGENOM" id="CLU_016739_0_0_3"/>
<dbReference type="OrthoDB" id="9809052at2"/>
<dbReference type="Proteomes" id="UP000001026">
    <property type="component" value="Chromosome"/>
</dbReference>
<dbReference type="GO" id="GO:0005829">
    <property type="term" value="C:cytosol"/>
    <property type="evidence" value="ECO:0007669"/>
    <property type="project" value="TreeGrafter"/>
</dbReference>
<dbReference type="GO" id="GO:0002161">
    <property type="term" value="F:aminoacyl-tRNA deacylase activity"/>
    <property type="evidence" value="ECO:0007669"/>
    <property type="project" value="InterPro"/>
</dbReference>
<dbReference type="GO" id="GO:0005524">
    <property type="term" value="F:ATP binding"/>
    <property type="evidence" value="ECO:0007669"/>
    <property type="project" value="UniProtKB-UniRule"/>
</dbReference>
<dbReference type="GO" id="GO:0004827">
    <property type="term" value="F:proline-tRNA ligase activity"/>
    <property type="evidence" value="ECO:0007669"/>
    <property type="project" value="UniProtKB-UniRule"/>
</dbReference>
<dbReference type="GO" id="GO:0006433">
    <property type="term" value="P:prolyl-tRNA aminoacylation"/>
    <property type="evidence" value="ECO:0007669"/>
    <property type="project" value="UniProtKB-UniRule"/>
</dbReference>
<dbReference type="CDD" id="cd04334">
    <property type="entry name" value="ProRS-INS"/>
    <property type="match status" value="1"/>
</dbReference>
<dbReference type="Gene3D" id="3.40.50.800">
    <property type="entry name" value="Anticodon-binding domain"/>
    <property type="match status" value="1"/>
</dbReference>
<dbReference type="Gene3D" id="3.30.930.10">
    <property type="entry name" value="Bira Bifunctional Protein, Domain 2"/>
    <property type="match status" value="2"/>
</dbReference>
<dbReference type="HAMAP" id="MF_01569">
    <property type="entry name" value="Pro_tRNA_synth_type1"/>
    <property type="match status" value="1"/>
</dbReference>
<dbReference type="InterPro" id="IPR002314">
    <property type="entry name" value="aa-tRNA-synt_IIb"/>
</dbReference>
<dbReference type="InterPro" id="IPR006195">
    <property type="entry name" value="aa-tRNA-synth_II"/>
</dbReference>
<dbReference type="InterPro" id="IPR045864">
    <property type="entry name" value="aa-tRNA-synth_II/BPL/LPL"/>
</dbReference>
<dbReference type="InterPro" id="IPR004154">
    <property type="entry name" value="Anticodon-bd"/>
</dbReference>
<dbReference type="InterPro" id="IPR036621">
    <property type="entry name" value="Anticodon-bd_dom_sf"/>
</dbReference>
<dbReference type="InterPro" id="IPR002316">
    <property type="entry name" value="Pro-tRNA-ligase_IIa"/>
</dbReference>
<dbReference type="InterPro" id="IPR004500">
    <property type="entry name" value="Pro-tRNA-synth_IIa_bac-type"/>
</dbReference>
<dbReference type="InterPro" id="IPR023717">
    <property type="entry name" value="Pro-tRNA-Synthase_IIa_type1"/>
</dbReference>
<dbReference type="InterPro" id="IPR050062">
    <property type="entry name" value="Pro-tRNA_synthetase"/>
</dbReference>
<dbReference type="InterPro" id="IPR036754">
    <property type="entry name" value="YbaK/aa-tRNA-synt-asso_dom_sf"/>
</dbReference>
<dbReference type="NCBIfam" id="NF006625">
    <property type="entry name" value="PRK09194.1"/>
    <property type="match status" value="1"/>
</dbReference>
<dbReference type="NCBIfam" id="TIGR00409">
    <property type="entry name" value="proS_fam_II"/>
    <property type="match status" value="1"/>
</dbReference>
<dbReference type="PANTHER" id="PTHR42753">
    <property type="entry name" value="MITOCHONDRIAL RIBOSOME PROTEIN L39/PROLYL-TRNA LIGASE FAMILY MEMBER"/>
    <property type="match status" value="1"/>
</dbReference>
<dbReference type="PANTHER" id="PTHR42753:SF2">
    <property type="entry name" value="PROLINE--TRNA LIGASE"/>
    <property type="match status" value="1"/>
</dbReference>
<dbReference type="Pfam" id="PF03129">
    <property type="entry name" value="HGTP_anticodon"/>
    <property type="match status" value="1"/>
</dbReference>
<dbReference type="Pfam" id="PF00587">
    <property type="entry name" value="tRNA-synt_2b"/>
    <property type="match status" value="1"/>
</dbReference>
<dbReference type="PRINTS" id="PR01046">
    <property type="entry name" value="TRNASYNTHPRO"/>
</dbReference>
<dbReference type="SUPFAM" id="SSF52954">
    <property type="entry name" value="Class II aaRS ABD-related"/>
    <property type="match status" value="1"/>
</dbReference>
<dbReference type="SUPFAM" id="SSF55681">
    <property type="entry name" value="Class II aaRS and biotin synthetases"/>
    <property type="match status" value="1"/>
</dbReference>
<dbReference type="SUPFAM" id="SSF55826">
    <property type="entry name" value="YbaK/ProRS associated domain"/>
    <property type="match status" value="1"/>
</dbReference>
<dbReference type="PROSITE" id="PS50862">
    <property type="entry name" value="AA_TRNA_LIGASE_II"/>
    <property type="match status" value="1"/>
</dbReference>
<protein>
    <recommendedName>
        <fullName evidence="1">Proline--tRNA ligase</fullName>
        <ecNumber evidence="1">6.1.1.15</ecNumber>
    </recommendedName>
    <alternativeName>
        <fullName evidence="1">Prolyl-tRNA synthetase</fullName>
        <shortName evidence="1">ProRS</shortName>
    </alternativeName>
</protein>
<reference key="1">
    <citation type="journal article" date="2003" name="Nature">
        <title>Genome divergence in two Prochlorococcus ecotypes reflects oceanic niche differentiation.</title>
        <authorList>
            <person name="Rocap G."/>
            <person name="Larimer F.W."/>
            <person name="Lamerdin J.E."/>
            <person name="Malfatti S."/>
            <person name="Chain P."/>
            <person name="Ahlgren N.A."/>
            <person name="Arellano A."/>
            <person name="Coleman M."/>
            <person name="Hauser L."/>
            <person name="Hess W.R."/>
            <person name="Johnson Z.I."/>
            <person name="Land M.L."/>
            <person name="Lindell D."/>
            <person name="Post A.F."/>
            <person name="Regala W."/>
            <person name="Shah M."/>
            <person name="Shaw S.L."/>
            <person name="Steglich C."/>
            <person name="Sullivan M.B."/>
            <person name="Ting C.S."/>
            <person name="Tolonen A."/>
            <person name="Webb E.A."/>
            <person name="Zinser E.R."/>
            <person name="Chisholm S.W."/>
        </authorList>
    </citation>
    <scope>NUCLEOTIDE SEQUENCE [LARGE SCALE GENOMIC DNA]</scope>
    <source>
        <strain>CCMP1986 / NIES-2087 / MED4</strain>
    </source>
</reference>
<name>SYP_PROMP</name>
<feature type="chain" id="PRO_0000248741" description="Proline--tRNA ligase">
    <location>
        <begin position="1"/>
        <end position="600"/>
    </location>
</feature>
<keyword id="KW-0030">Aminoacyl-tRNA synthetase</keyword>
<keyword id="KW-0067">ATP-binding</keyword>
<keyword id="KW-0963">Cytoplasm</keyword>
<keyword id="KW-0436">Ligase</keyword>
<keyword id="KW-0547">Nucleotide-binding</keyword>
<keyword id="KW-0648">Protein biosynthesis</keyword>
<proteinExistence type="inferred from homology"/>
<sequence length="600" mass="68208">MRVTTSFPLGTLRDTPSEAEIISHQLLLKGGYIRRVNSGIYAYMPIMLRVIEKISTIIEKELNNIYCSKLLLPQLHPAELWKKSERWEGYTAGEGIMFNLKDRQGKEFGLAPTHEEVITSIASEMINSYKQLPLCFYQIQTKFRDEIRPRFGLMRSREFIMKDAYSFHSSKEDLASFYEKMEKAYENIFKNCGLDTVGVDADSGAIGGAASKEFMVTADAGEDSILFTESGSYAANIEKAVSLPSKEIPLIRSHEEWIETPNQKSIVDICQNNNLDASQIIKVVIFLAKFEDKSEVPILACIRGDQNINEVKLFNLINKKYISNLIHLKIVDDNAIINKNLINFPLGFIGPDINDETIKINSSWDKSWIRIADYSASSLSIFVSGGNKVDFHKVFRAFSFIEKKFLISDIRNAKKGDCISQESNEELKEKRGIEIGHIFQLGQKYSEKLNAKFSDKNGQLKNLWMGCYGIGVTRIAQAAIEQNHDENGISWPIQISPFEILIIPTNLKDPIQKELTQEIYEEFISNQIDVLLDDRDDRAGVKFKDADLIGIPFQIIIGRDSINKEVEFFSRSSKSKIKIASKNLLEKFISESKVMYNKNS</sequence>
<gene>
    <name evidence="1" type="primary">proS</name>
    <name type="ordered locus">PMM0508</name>
</gene>
<evidence type="ECO:0000255" key="1">
    <source>
        <dbReference type="HAMAP-Rule" id="MF_01569"/>
    </source>
</evidence>
<organism>
    <name type="scientific">Prochlorococcus marinus subsp. pastoris (strain CCMP1986 / NIES-2087 / MED4)</name>
    <dbReference type="NCBI Taxonomy" id="59919"/>
    <lineage>
        <taxon>Bacteria</taxon>
        <taxon>Bacillati</taxon>
        <taxon>Cyanobacteriota</taxon>
        <taxon>Cyanophyceae</taxon>
        <taxon>Synechococcales</taxon>
        <taxon>Prochlorococcaceae</taxon>
        <taxon>Prochlorococcus</taxon>
    </lineage>
</organism>
<accession>Q7V2H0</accession>
<comment type="function">
    <text evidence="1">Catalyzes the attachment of proline to tRNA(Pro) in a two-step reaction: proline is first activated by ATP to form Pro-AMP and then transferred to the acceptor end of tRNA(Pro). As ProRS can inadvertently accommodate and process non-cognate amino acids such as alanine and cysteine, to avoid such errors it has two additional distinct editing activities against alanine. One activity is designated as 'pretransfer' editing and involves the tRNA(Pro)-independent hydrolysis of activated Ala-AMP. The other activity is designated 'posttransfer' editing and involves deacylation of mischarged Ala-tRNA(Pro). The misacylated Cys-tRNA(Pro) is not edited by ProRS.</text>
</comment>
<comment type="catalytic activity">
    <reaction evidence="1">
        <text>tRNA(Pro) + L-proline + ATP = L-prolyl-tRNA(Pro) + AMP + diphosphate</text>
        <dbReference type="Rhea" id="RHEA:14305"/>
        <dbReference type="Rhea" id="RHEA-COMP:9700"/>
        <dbReference type="Rhea" id="RHEA-COMP:9702"/>
        <dbReference type="ChEBI" id="CHEBI:30616"/>
        <dbReference type="ChEBI" id="CHEBI:33019"/>
        <dbReference type="ChEBI" id="CHEBI:60039"/>
        <dbReference type="ChEBI" id="CHEBI:78442"/>
        <dbReference type="ChEBI" id="CHEBI:78532"/>
        <dbReference type="ChEBI" id="CHEBI:456215"/>
        <dbReference type="EC" id="6.1.1.15"/>
    </reaction>
</comment>
<comment type="subunit">
    <text evidence="1">Homodimer.</text>
</comment>
<comment type="subcellular location">
    <subcellularLocation>
        <location evidence="1">Cytoplasm</location>
    </subcellularLocation>
</comment>
<comment type="domain">
    <text evidence="1">Consists of three domains: the N-terminal catalytic domain, the editing domain and the C-terminal anticodon-binding domain.</text>
</comment>
<comment type="similarity">
    <text evidence="1">Belongs to the class-II aminoacyl-tRNA synthetase family. ProS type 1 subfamily.</text>
</comment>